<evidence type="ECO:0000255" key="1">
    <source>
        <dbReference type="HAMAP-Rule" id="MF_01342"/>
    </source>
</evidence>
<evidence type="ECO:0000256" key="2">
    <source>
        <dbReference type="SAM" id="MobiDB-lite"/>
    </source>
</evidence>
<evidence type="ECO:0000305" key="3"/>
<protein>
    <recommendedName>
        <fullName evidence="1">Large ribosomal subunit protein uL16</fullName>
    </recommendedName>
    <alternativeName>
        <fullName evidence="3">50S ribosomal protein L16</fullName>
    </alternativeName>
</protein>
<proteinExistence type="inferred from homology"/>
<reference key="1">
    <citation type="journal article" date="2009" name="Infect. Immun.">
        <title>Comparative genomics reveal extensive transposon-mediated genomic plasticity and diversity among potential effector proteins within the genus Coxiella.</title>
        <authorList>
            <person name="Beare P.A."/>
            <person name="Unsworth N."/>
            <person name="Andoh M."/>
            <person name="Voth D.E."/>
            <person name="Omsland A."/>
            <person name="Gilk S.D."/>
            <person name="Williams K.P."/>
            <person name="Sobral B.W."/>
            <person name="Kupko J.J. III"/>
            <person name="Porcella S.F."/>
            <person name="Samuel J.E."/>
            <person name="Heinzen R.A."/>
        </authorList>
    </citation>
    <scope>NUCLEOTIDE SEQUENCE [LARGE SCALE GENOMIC DNA]</scope>
    <source>
        <strain>Dugway 5J108-111</strain>
    </source>
</reference>
<dbReference type="EMBL" id="CP000733">
    <property type="protein sequence ID" value="ABS76493.1"/>
    <property type="molecule type" value="Genomic_DNA"/>
</dbReference>
<dbReference type="RefSeq" id="WP_010957459.1">
    <property type="nucleotide sequence ID" value="NC_009727.1"/>
</dbReference>
<dbReference type="SMR" id="A9KD24"/>
<dbReference type="KEGG" id="cbd:CBUD_1847"/>
<dbReference type="HOGENOM" id="CLU_078858_2_1_6"/>
<dbReference type="Proteomes" id="UP000008555">
    <property type="component" value="Chromosome"/>
</dbReference>
<dbReference type="GO" id="GO:0022625">
    <property type="term" value="C:cytosolic large ribosomal subunit"/>
    <property type="evidence" value="ECO:0007669"/>
    <property type="project" value="TreeGrafter"/>
</dbReference>
<dbReference type="GO" id="GO:0019843">
    <property type="term" value="F:rRNA binding"/>
    <property type="evidence" value="ECO:0007669"/>
    <property type="project" value="UniProtKB-UniRule"/>
</dbReference>
<dbReference type="GO" id="GO:0003735">
    <property type="term" value="F:structural constituent of ribosome"/>
    <property type="evidence" value="ECO:0007669"/>
    <property type="project" value="InterPro"/>
</dbReference>
<dbReference type="GO" id="GO:0000049">
    <property type="term" value="F:tRNA binding"/>
    <property type="evidence" value="ECO:0007669"/>
    <property type="project" value="UniProtKB-KW"/>
</dbReference>
<dbReference type="GO" id="GO:0006412">
    <property type="term" value="P:translation"/>
    <property type="evidence" value="ECO:0007669"/>
    <property type="project" value="UniProtKB-UniRule"/>
</dbReference>
<dbReference type="CDD" id="cd01433">
    <property type="entry name" value="Ribosomal_L16_L10e"/>
    <property type="match status" value="1"/>
</dbReference>
<dbReference type="FunFam" id="3.90.1170.10:FF:000001">
    <property type="entry name" value="50S ribosomal protein L16"/>
    <property type="match status" value="1"/>
</dbReference>
<dbReference type="Gene3D" id="3.90.1170.10">
    <property type="entry name" value="Ribosomal protein L10e/L16"/>
    <property type="match status" value="1"/>
</dbReference>
<dbReference type="HAMAP" id="MF_01342">
    <property type="entry name" value="Ribosomal_uL16"/>
    <property type="match status" value="1"/>
</dbReference>
<dbReference type="InterPro" id="IPR047873">
    <property type="entry name" value="Ribosomal_uL16"/>
</dbReference>
<dbReference type="InterPro" id="IPR000114">
    <property type="entry name" value="Ribosomal_uL16_bact-type"/>
</dbReference>
<dbReference type="InterPro" id="IPR016180">
    <property type="entry name" value="Ribosomal_uL16_dom"/>
</dbReference>
<dbReference type="InterPro" id="IPR036920">
    <property type="entry name" value="Ribosomal_uL16_sf"/>
</dbReference>
<dbReference type="NCBIfam" id="TIGR01164">
    <property type="entry name" value="rplP_bact"/>
    <property type="match status" value="1"/>
</dbReference>
<dbReference type="PANTHER" id="PTHR12220">
    <property type="entry name" value="50S/60S RIBOSOMAL PROTEIN L16"/>
    <property type="match status" value="1"/>
</dbReference>
<dbReference type="PANTHER" id="PTHR12220:SF13">
    <property type="entry name" value="LARGE RIBOSOMAL SUBUNIT PROTEIN UL16M"/>
    <property type="match status" value="1"/>
</dbReference>
<dbReference type="Pfam" id="PF00252">
    <property type="entry name" value="Ribosomal_L16"/>
    <property type="match status" value="1"/>
</dbReference>
<dbReference type="PRINTS" id="PR00060">
    <property type="entry name" value="RIBOSOMALL16"/>
</dbReference>
<dbReference type="SUPFAM" id="SSF54686">
    <property type="entry name" value="Ribosomal protein L16p/L10e"/>
    <property type="match status" value="1"/>
</dbReference>
<gene>
    <name evidence="1" type="primary">rplP</name>
    <name type="ordered locus">CBUD_1847</name>
</gene>
<accession>A9KD24</accession>
<name>RL16_COXBN</name>
<organism>
    <name type="scientific">Coxiella burnetii (strain Dugway 5J108-111)</name>
    <dbReference type="NCBI Taxonomy" id="434922"/>
    <lineage>
        <taxon>Bacteria</taxon>
        <taxon>Pseudomonadati</taxon>
        <taxon>Pseudomonadota</taxon>
        <taxon>Gammaproteobacteria</taxon>
        <taxon>Legionellales</taxon>
        <taxon>Coxiellaceae</taxon>
        <taxon>Coxiella</taxon>
    </lineage>
</organism>
<comment type="function">
    <text evidence="1">Binds 23S rRNA and is also seen to make contacts with the A and possibly P site tRNAs.</text>
</comment>
<comment type="subunit">
    <text evidence="1">Part of the 50S ribosomal subunit.</text>
</comment>
<comment type="similarity">
    <text evidence="1">Belongs to the universal ribosomal protein uL16 family.</text>
</comment>
<keyword id="KW-0687">Ribonucleoprotein</keyword>
<keyword id="KW-0689">Ribosomal protein</keyword>
<keyword id="KW-0694">RNA-binding</keyword>
<keyword id="KW-0699">rRNA-binding</keyword>
<keyword id="KW-0820">tRNA-binding</keyword>
<sequence length="137" mass="15499">MLQPSNRKYRKDFKGRNRGVASRGNRVSFGEFGLKATECARITARQLEAARRTIARHIKRGGKITIRIFPDKPITKKPLEVRQGKGKGSVEYWVALVQPGRMIFEIEGVDEALAREAFSRAAAKLPLKCLFVKRTVM</sequence>
<feature type="chain" id="PRO_1000086751" description="Large ribosomal subunit protein uL16">
    <location>
        <begin position="1"/>
        <end position="137"/>
    </location>
</feature>
<feature type="region of interest" description="Disordered" evidence="2">
    <location>
        <begin position="1"/>
        <end position="20"/>
    </location>
</feature>
<feature type="compositionally biased region" description="Basic residues" evidence="2">
    <location>
        <begin position="7"/>
        <end position="17"/>
    </location>
</feature>